<gene>
    <name evidence="1" type="primary">rpsJ</name>
    <name type="ordered locus">Smal_0755</name>
</gene>
<name>RS10_STRM5</name>
<protein>
    <recommendedName>
        <fullName evidence="1">Small ribosomal subunit protein uS10</fullName>
    </recommendedName>
    <alternativeName>
        <fullName evidence="2">30S ribosomal protein S10</fullName>
    </alternativeName>
</protein>
<evidence type="ECO:0000255" key="1">
    <source>
        <dbReference type="HAMAP-Rule" id="MF_00508"/>
    </source>
</evidence>
<evidence type="ECO:0000305" key="2"/>
<accession>B4SKW2</accession>
<proteinExistence type="inferred from homology"/>
<keyword id="KW-0687">Ribonucleoprotein</keyword>
<keyword id="KW-0689">Ribosomal protein</keyword>
<organism>
    <name type="scientific">Stenotrophomonas maltophilia (strain R551-3)</name>
    <dbReference type="NCBI Taxonomy" id="391008"/>
    <lineage>
        <taxon>Bacteria</taxon>
        <taxon>Pseudomonadati</taxon>
        <taxon>Pseudomonadota</taxon>
        <taxon>Gammaproteobacteria</taxon>
        <taxon>Lysobacterales</taxon>
        <taxon>Lysobacteraceae</taxon>
        <taxon>Stenotrophomonas</taxon>
        <taxon>Stenotrophomonas maltophilia group</taxon>
    </lineage>
</organism>
<reference key="1">
    <citation type="submission" date="2008-06" db="EMBL/GenBank/DDBJ databases">
        <title>Complete sequence of Stenotrophomonas maltophilia R551-3.</title>
        <authorList>
            <consortium name="US DOE Joint Genome Institute"/>
            <person name="Lucas S."/>
            <person name="Copeland A."/>
            <person name="Lapidus A."/>
            <person name="Glavina del Rio T."/>
            <person name="Dalin E."/>
            <person name="Tice H."/>
            <person name="Pitluck S."/>
            <person name="Chain P."/>
            <person name="Malfatti S."/>
            <person name="Shin M."/>
            <person name="Vergez L."/>
            <person name="Lang D."/>
            <person name="Schmutz J."/>
            <person name="Larimer F."/>
            <person name="Land M."/>
            <person name="Hauser L."/>
            <person name="Kyrpides N."/>
            <person name="Mikhailova N."/>
            <person name="Taghavi S."/>
            <person name="Monchy S."/>
            <person name="Newman L."/>
            <person name="Vangronsveld J."/>
            <person name="van der Lelie D."/>
            <person name="Richardson P."/>
        </authorList>
    </citation>
    <scope>NUCLEOTIDE SEQUENCE [LARGE SCALE GENOMIC DNA]</scope>
    <source>
        <strain>R551-3</strain>
    </source>
</reference>
<comment type="function">
    <text evidence="1">Involved in the binding of tRNA to the ribosomes.</text>
</comment>
<comment type="subunit">
    <text evidence="1">Part of the 30S ribosomal subunit.</text>
</comment>
<comment type="similarity">
    <text evidence="1">Belongs to the universal ribosomal protein uS10 family.</text>
</comment>
<dbReference type="EMBL" id="CP001111">
    <property type="protein sequence ID" value="ACF50460.1"/>
    <property type="molecule type" value="Genomic_DNA"/>
</dbReference>
<dbReference type="RefSeq" id="WP_005408208.1">
    <property type="nucleotide sequence ID" value="NC_011071.1"/>
</dbReference>
<dbReference type="SMR" id="B4SKW2"/>
<dbReference type="STRING" id="391008.Smal_0755"/>
<dbReference type="GeneID" id="97259933"/>
<dbReference type="KEGG" id="smt:Smal_0755"/>
<dbReference type="eggNOG" id="COG0051">
    <property type="taxonomic scope" value="Bacteria"/>
</dbReference>
<dbReference type="HOGENOM" id="CLU_122625_1_3_6"/>
<dbReference type="OrthoDB" id="9804464at2"/>
<dbReference type="Proteomes" id="UP000001867">
    <property type="component" value="Chromosome"/>
</dbReference>
<dbReference type="GO" id="GO:1990904">
    <property type="term" value="C:ribonucleoprotein complex"/>
    <property type="evidence" value="ECO:0007669"/>
    <property type="project" value="UniProtKB-KW"/>
</dbReference>
<dbReference type="GO" id="GO:0005840">
    <property type="term" value="C:ribosome"/>
    <property type="evidence" value="ECO:0007669"/>
    <property type="project" value="UniProtKB-KW"/>
</dbReference>
<dbReference type="GO" id="GO:0003735">
    <property type="term" value="F:structural constituent of ribosome"/>
    <property type="evidence" value="ECO:0007669"/>
    <property type="project" value="InterPro"/>
</dbReference>
<dbReference type="GO" id="GO:0000049">
    <property type="term" value="F:tRNA binding"/>
    <property type="evidence" value="ECO:0007669"/>
    <property type="project" value="UniProtKB-UniRule"/>
</dbReference>
<dbReference type="GO" id="GO:0006412">
    <property type="term" value="P:translation"/>
    <property type="evidence" value="ECO:0007669"/>
    <property type="project" value="UniProtKB-UniRule"/>
</dbReference>
<dbReference type="FunFam" id="3.30.70.600:FF:000001">
    <property type="entry name" value="30S ribosomal protein S10"/>
    <property type="match status" value="1"/>
</dbReference>
<dbReference type="Gene3D" id="3.30.70.600">
    <property type="entry name" value="Ribosomal protein S10 domain"/>
    <property type="match status" value="1"/>
</dbReference>
<dbReference type="HAMAP" id="MF_00508">
    <property type="entry name" value="Ribosomal_uS10"/>
    <property type="match status" value="1"/>
</dbReference>
<dbReference type="InterPro" id="IPR001848">
    <property type="entry name" value="Ribosomal_uS10"/>
</dbReference>
<dbReference type="InterPro" id="IPR018268">
    <property type="entry name" value="Ribosomal_uS10_CS"/>
</dbReference>
<dbReference type="InterPro" id="IPR027486">
    <property type="entry name" value="Ribosomal_uS10_dom"/>
</dbReference>
<dbReference type="InterPro" id="IPR036838">
    <property type="entry name" value="Ribosomal_uS10_dom_sf"/>
</dbReference>
<dbReference type="NCBIfam" id="NF001861">
    <property type="entry name" value="PRK00596.1"/>
    <property type="match status" value="1"/>
</dbReference>
<dbReference type="NCBIfam" id="TIGR01049">
    <property type="entry name" value="rpsJ_bact"/>
    <property type="match status" value="1"/>
</dbReference>
<dbReference type="PANTHER" id="PTHR11700">
    <property type="entry name" value="30S RIBOSOMAL PROTEIN S10 FAMILY MEMBER"/>
    <property type="match status" value="1"/>
</dbReference>
<dbReference type="Pfam" id="PF00338">
    <property type="entry name" value="Ribosomal_S10"/>
    <property type="match status" value="1"/>
</dbReference>
<dbReference type="PRINTS" id="PR00971">
    <property type="entry name" value="RIBOSOMALS10"/>
</dbReference>
<dbReference type="SMART" id="SM01403">
    <property type="entry name" value="Ribosomal_S10"/>
    <property type="match status" value="1"/>
</dbReference>
<dbReference type="SUPFAM" id="SSF54999">
    <property type="entry name" value="Ribosomal protein S10"/>
    <property type="match status" value="1"/>
</dbReference>
<dbReference type="PROSITE" id="PS00361">
    <property type="entry name" value="RIBOSOMAL_S10"/>
    <property type="match status" value="1"/>
</dbReference>
<sequence>MADQKIRIRLKAFDHRLIDRSASEIVETAKRTGAQVRGPIPLPTKIERYTVLVSPHVDKDARDQYETRTHKRVLDIVDPNDKTVDALMKLELAAGVDVQIKLT</sequence>
<feature type="chain" id="PRO_1000127187" description="Small ribosomal subunit protein uS10">
    <location>
        <begin position="1"/>
        <end position="103"/>
    </location>
</feature>